<accession>Q2KJ21</accession>
<proteinExistence type="evidence at transcript level"/>
<comment type="function">
    <text evidence="2">Functions as a coactivator for aryl hydrocarbon and nuclear receptors (NR). Recruited to promoters through its contact with the N-terminal basic helix-loop-helix-Per-Arnt-Sim (PAS) domain of transcription factors or coactivators, such as NCOA2. During ER-activation acts synergistically in combination with other NCOA2-binding proteins, such as EP300, CREBBP and CARM1. Involved in the transcriptional activation of target genes in the Wnt/CTNNB1 pathway. Functions as a secondary coactivator in LEF1-mediated transcriptional activation via its interaction with CTNNB1. Coactivator function for nuclear receptors and LEF1/CTNNB1 involves differential utilization of two different activation regions. In association with CCAR1 enhances GATA1- and MED1-mediated transcriptional activation from the gamma-globin promoter during erythroid differentiation of K562 erythroleukemia cells (By similarity).</text>
</comment>
<comment type="function">
    <text evidence="1">Seems to enhance inorganic pyrophosphatase thus activating phosphogluomutase (PMG). Probably functions as a component of the calphoglin complex, which is involved in linking cellular metabolism (phosphate and glucose metabolism) with other core functions including protein synthesis and degradation, calcium signaling and cell growth (By similarity).</text>
</comment>
<comment type="subunit">
    <text evidence="2 3">Part of a calphoglin complex consisting of CALCOCO1, PPA1 and PGM (By similarity). Interacts with the bHLH-PAS domains of GRIP1, AHR and ARNT. Interacts with CTNNB1 via both its N- and C-terminal regions. Interacts with EP300. Interacts with CCAR1 (via N-terminus) and GATA1 (By similarity).</text>
</comment>
<comment type="subcellular location">
    <subcellularLocation>
        <location evidence="1">Cytoplasm</location>
    </subcellularLocation>
    <subcellularLocation>
        <location evidence="1">Nucleus</location>
    </subcellularLocation>
    <text evidence="1">Shuttles between nucleus and cytoplasm.</text>
</comment>
<comment type="domain">
    <text evidence="1">The C-terminal activation region (AD) is used for downstream signaling. Seems to be essential for coactivator function with nuclear receptors and with the aryl hydrocarbon receptor (By similarity).</text>
</comment>
<comment type="domain">
    <text evidence="1">The N-terminal activation region (AD) is necessary and sufficient for synergistic activation of LEF1-mediated transcription by CTNNB1. Contains a EP3000 binding region which is important for synergistic cooperation (By similarity).</text>
</comment>
<comment type="domain">
    <text evidence="1">Recruitment by nuclear receptors is accomplished by the interaction of the coiled-coiled domain with p160 coactivators.</text>
</comment>
<comment type="similarity">
    <text evidence="7">Belongs to the CALCOCO family.</text>
</comment>
<evidence type="ECO:0000250" key="1"/>
<evidence type="ECO:0000250" key="2">
    <source>
        <dbReference type="UniProtKB" id="Q8CGU1"/>
    </source>
</evidence>
<evidence type="ECO:0000250" key="3">
    <source>
        <dbReference type="UniProtKB" id="Q9P1Z2"/>
    </source>
</evidence>
<evidence type="ECO:0000255" key="4"/>
<evidence type="ECO:0000255" key="5">
    <source>
        <dbReference type="PROSITE-ProRule" id="PRU01253"/>
    </source>
</evidence>
<evidence type="ECO:0000256" key="6">
    <source>
        <dbReference type="SAM" id="MobiDB-lite"/>
    </source>
</evidence>
<evidence type="ECO:0000305" key="7"/>
<feature type="chain" id="PRO_0000308898" description="Calcium-binding and coiled-coil domain-containing protein 1">
    <location>
        <begin position="1"/>
        <end position="680"/>
    </location>
</feature>
<feature type="zinc finger region" description="UBZ1-type" evidence="5">
    <location>
        <begin position="654"/>
        <end position="679"/>
    </location>
</feature>
<feature type="region of interest" description="N-terminal AD (CTNNB1 binding site)" evidence="1">
    <location>
        <begin position="1"/>
        <end position="190"/>
    </location>
</feature>
<feature type="region of interest" description="p300 KIX-binding" evidence="1">
    <location>
        <begin position="1"/>
        <end position="30"/>
    </location>
</feature>
<feature type="region of interest" description="Interaction with GATA1" evidence="2">
    <location>
        <begin position="45"/>
        <end position="125"/>
    </location>
</feature>
<feature type="region of interest" description="C-terminal AD (CTNNB1 binding site); interaction with CCAR1" evidence="2">
    <location>
        <begin position="501"/>
        <end position="680"/>
    </location>
</feature>
<feature type="region of interest" description="Disordered" evidence="6">
    <location>
        <begin position="511"/>
        <end position="606"/>
    </location>
</feature>
<feature type="coiled-coil region" evidence="4">
    <location>
        <begin position="145"/>
        <end position="205"/>
    </location>
</feature>
<feature type="coiled-coil region" evidence="4">
    <location>
        <begin position="232"/>
        <end position="339"/>
    </location>
</feature>
<feature type="coiled-coil region" evidence="4">
    <location>
        <begin position="417"/>
        <end position="514"/>
    </location>
</feature>
<feature type="binding site" evidence="5">
    <location>
        <position position="657"/>
    </location>
    <ligand>
        <name>Zn(2+)</name>
        <dbReference type="ChEBI" id="CHEBI:29105"/>
    </ligand>
</feature>
<feature type="binding site" evidence="5">
    <location>
        <position position="660"/>
    </location>
    <ligand>
        <name>Zn(2+)</name>
        <dbReference type="ChEBI" id="CHEBI:29105"/>
    </ligand>
</feature>
<feature type="binding site" evidence="5">
    <location>
        <position position="675"/>
    </location>
    <ligand>
        <name>Zn(2+)</name>
        <dbReference type="ChEBI" id="CHEBI:29105"/>
    </ligand>
</feature>
<feature type="binding site" evidence="5">
    <location>
        <position position="679"/>
    </location>
    <ligand>
        <name>Zn(2+)</name>
        <dbReference type="ChEBI" id="CHEBI:29105"/>
    </ligand>
</feature>
<feature type="modified residue" description="Phosphoserine" evidence="3">
    <location>
        <position position="4"/>
    </location>
</feature>
<reference key="1">
    <citation type="submission" date="2005-09" db="EMBL/GenBank/DDBJ databases">
        <authorList>
            <consortium name="NIH - Mammalian Gene Collection (MGC) project"/>
        </authorList>
    </citation>
    <scope>NUCLEOTIDE SEQUENCE [LARGE SCALE MRNA]</scope>
    <source>
        <strain>Hereford</strain>
        <tissue>Uterus</tissue>
    </source>
</reference>
<dbReference type="EMBL" id="BC105562">
    <property type="protein sequence ID" value="AAI05563.1"/>
    <property type="molecule type" value="mRNA"/>
</dbReference>
<dbReference type="RefSeq" id="NP_001039900.1">
    <property type="nucleotide sequence ID" value="NM_001046435.1"/>
</dbReference>
<dbReference type="SMR" id="Q2KJ21"/>
<dbReference type="FunCoup" id="Q2KJ21">
    <property type="interactions" value="105"/>
</dbReference>
<dbReference type="STRING" id="9913.ENSBTAP00000074398"/>
<dbReference type="PaxDb" id="9913-ENSBTAP00000019992"/>
<dbReference type="GeneID" id="538675"/>
<dbReference type="KEGG" id="bta:538675"/>
<dbReference type="CTD" id="57658"/>
<dbReference type="eggNOG" id="ENOG502QR9J">
    <property type="taxonomic scope" value="Eukaryota"/>
</dbReference>
<dbReference type="InParanoid" id="Q2KJ21"/>
<dbReference type="OrthoDB" id="10015001at2759"/>
<dbReference type="Proteomes" id="UP000009136">
    <property type="component" value="Unplaced"/>
</dbReference>
<dbReference type="GO" id="GO:0005737">
    <property type="term" value="C:cytoplasm"/>
    <property type="evidence" value="ECO:0007669"/>
    <property type="project" value="UniProtKB-SubCell"/>
</dbReference>
<dbReference type="GO" id="GO:0005634">
    <property type="term" value="C:nucleus"/>
    <property type="evidence" value="ECO:0007669"/>
    <property type="project" value="UniProtKB-SubCell"/>
</dbReference>
<dbReference type="GO" id="GO:0000978">
    <property type="term" value="F:RNA polymerase II cis-regulatory region sequence-specific DNA binding"/>
    <property type="evidence" value="ECO:0000250"/>
    <property type="project" value="UniProtKB"/>
</dbReference>
<dbReference type="GO" id="GO:0003713">
    <property type="term" value="F:transcription coactivator activity"/>
    <property type="evidence" value="ECO:0000250"/>
    <property type="project" value="UniProtKB"/>
</dbReference>
<dbReference type="GO" id="GO:0008270">
    <property type="term" value="F:zinc ion binding"/>
    <property type="evidence" value="ECO:0007669"/>
    <property type="project" value="UniProtKB-KW"/>
</dbReference>
<dbReference type="GO" id="GO:0045944">
    <property type="term" value="P:positive regulation of transcription by RNA polymerase II"/>
    <property type="evidence" value="ECO:0000318"/>
    <property type="project" value="GO_Central"/>
</dbReference>
<dbReference type="GO" id="GO:0016055">
    <property type="term" value="P:Wnt signaling pathway"/>
    <property type="evidence" value="ECO:0007669"/>
    <property type="project" value="UniProtKB-KW"/>
</dbReference>
<dbReference type="FunFam" id="2.60.40.2840:FF:000004">
    <property type="entry name" value="Calcium-binding and coiled-coil domain-containing protein 1"/>
    <property type="match status" value="1"/>
</dbReference>
<dbReference type="Gene3D" id="2.60.40.2840">
    <property type="match status" value="1"/>
</dbReference>
<dbReference type="InterPro" id="IPR012852">
    <property type="entry name" value="CALCOCO1-like"/>
</dbReference>
<dbReference type="InterPro" id="IPR041641">
    <property type="entry name" value="CALCOCO1/2_Zn_UBZ1"/>
</dbReference>
<dbReference type="InterPro" id="IPR041611">
    <property type="entry name" value="SKICH"/>
</dbReference>
<dbReference type="InterPro" id="IPR051002">
    <property type="entry name" value="UBA_autophagy_assoc_protein"/>
</dbReference>
<dbReference type="PANTHER" id="PTHR31915:SF5">
    <property type="entry name" value="CALCIUM-BINDING AND COILED-COIL DOMAIN-CONTAINING PROTEIN 1"/>
    <property type="match status" value="1"/>
</dbReference>
<dbReference type="PANTHER" id="PTHR31915">
    <property type="entry name" value="SKICH DOMAIN-CONTAINING PROTEIN"/>
    <property type="match status" value="1"/>
</dbReference>
<dbReference type="Pfam" id="PF07888">
    <property type="entry name" value="CALCOCO1"/>
    <property type="match status" value="1"/>
</dbReference>
<dbReference type="Pfam" id="PF17751">
    <property type="entry name" value="SKICH"/>
    <property type="match status" value="1"/>
</dbReference>
<dbReference type="PROSITE" id="PS51905">
    <property type="entry name" value="ZF_UBZ1"/>
    <property type="match status" value="1"/>
</dbReference>
<sequence>MEESSLSRAPSRGGVNFLNVARTYIPNTKVECHYTLPPGTVPSASDWIGIFKVEAACVRDYHTFVWSLVPESVTDGSPIHASVQFQASYLPKPGAQLYQFRYVNRQGRVCGQSPPFQFREPRPMDELVTLEETDGGSDILLVVPKATVLQNQLDESQQERNDLMQLKLQLEGQVTELKSQVQELEKALAAARQEHAELAEQYKGLSRSHGELTEERDILSRQQGDHVARILELEEDIQTISEKVLMKEVELDRVRDSVKALTREQEKLLGQLKEVQADKEQSEAELQMAQQENRRLNLELQEAKDRQEEQSAQAQRLKDKVAQMKDTLGQVQQRVAELEPLKEQLRGAQELAASSQQKAALLGEELASAAGARDRTIAELHRSRLEVAGVNGRLAELSLHLKEEKSQWSKERAGLLQSVEAEKDKILKLSAEILRLEKAVQEEKTQSQVFKTELAREKDSSLVQLSESKRELTELRSALRVLQKEKEQLQEEKQELLEYMRKLEARLEKVADEKWSEDPATEDEEAAVGLSCPAALTDSEDESPEDMRLPPYSLCESGDSGSSPATGPREASPLVVISQPAPIAPQLSGPAEDSSSDSEAEDEKSVLMAAVQSGGEEANLLLPELGSAFYDMASGFAVGPLTEASTGGPATPPWKECPICKERFPVHTQTHTYTHTHTHA</sequence>
<name>CACO1_BOVIN</name>
<gene>
    <name type="primary">CALCOCO1</name>
</gene>
<organism>
    <name type="scientific">Bos taurus</name>
    <name type="common">Bovine</name>
    <dbReference type="NCBI Taxonomy" id="9913"/>
    <lineage>
        <taxon>Eukaryota</taxon>
        <taxon>Metazoa</taxon>
        <taxon>Chordata</taxon>
        <taxon>Craniata</taxon>
        <taxon>Vertebrata</taxon>
        <taxon>Euteleostomi</taxon>
        <taxon>Mammalia</taxon>
        <taxon>Eutheria</taxon>
        <taxon>Laurasiatheria</taxon>
        <taxon>Artiodactyla</taxon>
        <taxon>Ruminantia</taxon>
        <taxon>Pecora</taxon>
        <taxon>Bovidae</taxon>
        <taxon>Bovinae</taxon>
        <taxon>Bos</taxon>
    </lineage>
</organism>
<protein>
    <recommendedName>
        <fullName>Calcium-binding and coiled-coil domain-containing protein 1</fullName>
    </recommendedName>
</protein>
<keyword id="KW-0010">Activator</keyword>
<keyword id="KW-0175">Coiled coil</keyword>
<keyword id="KW-0963">Cytoplasm</keyword>
<keyword id="KW-0479">Metal-binding</keyword>
<keyword id="KW-0539">Nucleus</keyword>
<keyword id="KW-0597">Phosphoprotein</keyword>
<keyword id="KW-1185">Reference proteome</keyword>
<keyword id="KW-0804">Transcription</keyword>
<keyword id="KW-0805">Transcription regulation</keyword>
<keyword id="KW-0879">Wnt signaling pathway</keyword>
<keyword id="KW-0862">Zinc</keyword>
<keyword id="KW-0863">Zinc-finger</keyword>